<organism>
    <name type="scientific">Dictyostelium discoideum</name>
    <name type="common">Social amoeba</name>
    <dbReference type="NCBI Taxonomy" id="44689"/>
    <lineage>
        <taxon>Eukaryota</taxon>
        <taxon>Amoebozoa</taxon>
        <taxon>Evosea</taxon>
        <taxon>Eumycetozoa</taxon>
        <taxon>Dictyostelia</taxon>
        <taxon>Dictyosteliales</taxon>
        <taxon>Dictyosteliaceae</taxon>
        <taxon>Dictyostelium</taxon>
    </lineage>
</organism>
<reference key="1">
    <citation type="journal article" date="2005" name="Nature">
        <title>The genome of the social amoeba Dictyostelium discoideum.</title>
        <authorList>
            <person name="Eichinger L."/>
            <person name="Pachebat J.A."/>
            <person name="Gloeckner G."/>
            <person name="Rajandream M.A."/>
            <person name="Sucgang R."/>
            <person name="Berriman M."/>
            <person name="Song J."/>
            <person name="Olsen R."/>
            <person name="Szafranski K."/>
            <person name="Xu Q."/>
            <person name="Tunggal B."/>
            <person name="Kummerfeld S."/>
            <person name="Madera M."/>
            <person name="Konfortov B.A."/>
            <person name="Rivero F."/>
            <person name="Bankier A.T."/>
            <person name="Lehmann R."/>
            <person name="Hamlin N."/>
            <person name="Davies R."/>
            <person name="Gaudet P."/>
            <person name="Fey P."/>
            <person name="Pilcher K."/>
            <person name="Chen G."/>
            <person name="Saunders D."/>
            <person name="Sodergren E.J."/>
            <person name="Davis P."/>
            <person name="Kerhornou A."/>
            <person name="Nie X."/>
            <person name="Hall N."/>
            <person name="Anjard C."/>
            <person name="Hemphill L."/>
            <person name="Bason N."/>
            <person name="Farbrother P."/>
            <person name="Desany B."/>
            <person name="Just E."/>
            <person name="Morio T."/>
            <person name="Rost R."/>
            <person name="Churcher C.M."/>
            <person name="Cooper J."/>
            <person name="Haydock S."/>
            <person name="van Driessche N."/>
            <person name="Cronin A."/>
            <person name="Goodhead I."/>
            <person name="Muzny D.M."/>
            <person name="Mourier T."/>
            <person name="Pain A."/>
            <person name="Lu M."/>
            <person name="Harper D."/>
            <person name="Lindsay R."/>
            <person name="Hauser H."/>
            <person name="James K.D."/>
            <person name="Quiles M."/>
            <person name="Madan Babu M."/>
            <person name="Saito T."/>
            <person name="Buchrieser C."/>
            <person name="Wardroper A."/>
            <person name="Felder M."/>
            <person name="Thangavelu M."/>
            <person name="Johnson D."/>
            <person name="Knights A."/>
            <person name="Loulseged H."/>
            <person name="Mungall K.L."/>
            <person name="Oliver K."/>
            <person name="Price C."/>
            <person name="Quail M.A."/>
            <person name="Urushihara H."/>
            <person name="Hernandez J."/>
            <person name="Rabbinowitsch E."/>
            <person name="Steffen D."/>
            <person name="Sanders M."/>
            <person name="Ma J."/>
            <person name="Kohara Y."/>
            <person name="Sharp S."/>
            <person name="Simmonds M.N."/>
            <person name="Spiegler S."/>
            <person name="Tivey A."/>
            <person name="Sugano S."/>
            <person name="White B."/>
            <person name="Walker D."/>
            <person name="Woodward J.R."/>
            <person name="Winckler T."/>
            <person name="Tanaka Y."/>
            <person name="Shaulsky G."/>
            <person name="Schleicher M."/>
            <person name="Weinstock G.M."/>
            <person name="Rosenthal A."/>
            <person name="Cox E.C."/>
            <person name="Chisholm R.L."/>
            <person name="Gibbs R.A."/>
            <person name="Loomis W.F."/>
            <person name="Platzer M."/>
            <person name="Kay R.R."/>
            <person name="Williams J.G."/>
            <person name="Dear P.H."/>
            <person name="Noegel A.A."/>
            <person name="Barrell B.G."/>
            <person name="Kuspa A."/>
        </authorList>
    </citation>
    <scope>NUCLEOTIDE SEQUENCE [LARGE SCALE GENOMIC DNA]</scope>
    <source>
        <strain>AX4</strain>
    </source>
</reference>
<dbReference type="EC" id="3.2.1.52"/>
<dbReference type="EMBL" id="AAFI02000103">
    <property type="protein sequence ID" value="EAL63607.1"/>
    <property type="molecule type" value="Genomic_DNA"/>
</dbReference>
<dbReference type="SMR" id="Q54K55"/>
<dbReference type="FunCoup" id="Q54K55">
    <property type="interactions" value="14"/>
</dbReference>
<dbReference type="STRING" id="44689.Q54K55"/>
<dbReference type="GlyCosmos" id="Q54K55">
    <property type="glycosylation" value="11 sites, No reported glycans"/>
</dbReference>
<dbReference type="GlyGen" id="Q54K55">
    <property type="glycosylation" value="11 sites"/>
</dbReference>
<dbReference type="PaxDb" id="44689-DDB0304520"/>
<dbReference type="EnsemblProtists" id="EAL63607">
    <property type="protein sequence ID" value="EAL63607"/>
    <property type="gene ID" value="DDB_G0287597"/>
</dbReference>
<dbReference type="KEGG" id="ddi:DDB_G0287597"/>
<dbReference type="dictyBase" id="DDB_G0287597">
    <property type="gene designation" value="nagC"/>
</dbReference>
<dbReference type="VEuPathDB" id="AmoebaDB:DDB_G0287597"/>
<dbReference type="eggNOG" id="KOG2499">
    <property type="taxonomic scope" value="Eukaryota"/>
</dbReference>
<dbReference type="HOGENOM" id="CLU_007082_0_4_1"/>
<dbReference type="InParanoid" id="Q54K55"/>
<dbReference type="OMA" id="SPKHVYT"/>
<dbReference type="PhylomeDB" id="Q54K55"/>
<dbReference type="Reactome" id="R-DDI-2022857">
    <property type="pathway name" value="Keratan sulfate degradation"/>
</dbReference>
<dbReference type="Reactome" id="R-DDI-2024101">
    <property type="pathway name" value="CS/DS degradation"/>
</dbReference>
<dbReference type="Reactome" id="R-DDI-2160916">
    <property type="pathway name" value="Hyaluronan uptake and degradation"/>
</dbReference>
<dbReference type="Reactome" id="R-DDI-9840310">
    <property type="pathway name" value="Glycosphingolipid catabolism"/>
</dbReference>
<dbReference type="PRO" id="PR:Q54K55"/>
<dbReference type="Proteomes" id="UP000002195">
    <property type="component" value="Chromosome 5"/>
</dbReference>
<dbReference type="GO" id="GO:0005764">
    <property type="term" value="C:lysosome"/>
    <property type="evidence" value="ECO:0000318"/>
    <property type="project" value="GO_Central"/>
</dbReference>
<dbReference type="GO" id="GO:0016020">
    <property type="term" value="C:membrane"/>
    <property type="evidence" value="ECO:0000318"/>
    <property type="project" value="GO_Central"/>
</dbReference>
<dbReference type="GO" id="GO:0004563">
    <property type="term" value="F:beta-N-acetylhexosaminidase activity"/>
    <property type="evidence" value="ECO:0000318"/>
    <property type="project" value="GO_Central"/>
</dbReference>
<dbReference type="GO" id="GO:0005975">
    <property type="term" value="P:carbohydrate metabolic process"/>
    <property type="evidence" value="ECO:0007669"/>
    <property type="project" value="InterPro"/>
</dbReference>
<dbReference type="GO" id="GO:0030203">
    <property type="term" value="P:glycosaminoglycan metabolic process"/>
    <property type="evidence" value="ECO:0000318"/>
    <property type="project" value="GO_Central"/>
</dbReference>
<dbReference type="GO" id="GO:0006491">
    <property type="term" value="P:N-glycan processing"/>
    <property type="evidence" value="ECO:0000318"/>
    <property type="project" value="GO_Central"/>
</dbReference>
<dbReference type="CDD" id="cd06562">
    <property type="entry name" value="GH20_HexA_HexB-like"/>
    <property type="match status" value="1"/>
</dbReference>
<dbReference type="FunFam" id="3.20.20.80:FF:000063">
    <property type="entry name" value="Beta-hexosaminidase"/>
    <property type="match status" value="1"/>
</dbReference>
<dbReference type="Gene3D" id="3.30.379.10">
    <property type="entry name" value="Chitobiase/beta-hexosaminidase domain 2-like"/>
    <property type="match status" value="1"/>
</dbReference>
<dbReference type="Gene3D" id="3.20.20.80">
    <property type="entry name" value="Glycosidases"/>
    <property type="match status" value="1"/>
</dbReference>
<dbReference type="InterPro" id="IPR025705">
    <property type="entry name" value="Beta_hexosaminidase_sua/sub"/>
</dbReference>
<dbReference type="InterPro" id="IPR015883">
    <property type="entry name" value="Glyco_hydro_20_cat"/>
</dbReference>
<dbReference type="InterPro" id="IPR017853">
    <property type="entry name" value="Glycoside_hydrolase_SF"/>
</dbReference>
<dbReference type="InterPro" id="IPR029018">
    <property type="entry name" value="Hex-like_dom2"/>
</dbReference>
<dbReference type="InterPro" id="IPR029019">
    <property type="entry name" value="HEX_eukaryotic_N"/>
</dbReference>
<dbReference type="PANTHER" id="PTHR22600">
    <property type="entry name" value="BETA-HEXOSAMINIDASE"/>
    <property type="match status" value="1"/>
</dbReference>
<dbReference type="PANTHER" id="PTHR22600:SF21">
    <property type="entry name" value="BETA-HEXOSAMINIDASE A"/>
    <property type="match status" value="1"/>
</dbReference>
<dbReference type="Pfam" id="PF00728">
    <property type="entry name" value="Glyco_hydro_20"/>
    <property type="match status" value="1"/>
</dbReference>
<dbReference type="Pfam" id="PF14845">
    <property type="entry name" value="Glycohydro_20b2"/>
    <property type="match status" value="1"/>
</dbReference>
<dbReference type="PIRSF" id="PIRSF001093">
    <property type="entry name" value="B-hxosamndse_ab_euk"/>
    <property type="match status" value="1"/>
</dbReference>
<dbReference type="PRINTS" id="PR00738">
    <property type="entry name" value="GLHYDRLASE20"/>
</dbReference>
<dbReference type="SUPFAM" id="SSF51445">
    <property type="entry name" value="(Trans)glycosidases"/>
    <property type="match status" value="1"/>
</dbReference>
<dbReference type="SUPFAM" id="SSF55545">
    <property type="entry name" value="beta-N-acetylhexosaminidase-like domain"/>
    <property type="match status" value="1"/>
</dbReference>
<feature type="signal peptide" evidence="2">
    <location>
        <begin position="1"/>
        <end position="25"/>
    </location>
</feature>
<feature type="chain" id="PRO_0000331237" description="Beta-hexosaminidase subunit B1">
    <location>
        <begin position="26"/>
        <end position="560"/>
    </location>
</feature>
<feature type="active site" description="Proton donor" evidence="1">
    <location>
        <position position="359"/>
    </location>
</feature>
<feature type="glycosylation site" description="N-linked (GlcNAc...) asparagine" evidence="2">
    <location>
        <position position="59"/>
    </location>
</feature>
<feature type="glycosylation site" description="N-linked (GlcNAc...) asparagine" evidence="2">
    <location>
        <position position="69"/>
    </location>
</feature>
<feature type="glycosylation site" description="N-linked (GlcNAc...) asparagine" evidence="2">
    <location>
        <position position="81"/>
    </location>
</feature>
<feature type="glycosylation site" description="N-linked (GlcNAc...) asparagine" evidence="2">
    <location>
        <position position="99"/>
    </location>
</feature>
<feature type="glycosylation site" description="N-linked (GlcNAc...) asparagine" evidence="2">
    <location>
        <position position="161"/>
    </location>
</feature>
<feature type="glycosylation site" description="N-linked (GlcNAc...) asparagine" evidence="2">
    <location>
        <position position="293"/>
    </location>
</feature>
<feature type="glycosylation site" description="N-linked (GlcNAc...) asparagine" evidence="2">
    <location>
        <position position="346"/>
    </location>
</feature>
<feature type="glycosylation site" description="N-linked (GlcNAc...) asparagine" evidence="2">
    <location>
        <position position="366"/>
    </location>
</feature>
<feature type="glycosylation site" description="N-linked (GlcNAc...) asparagine" evidence="2">
    <location>
        <position position="436"/>
    </location>
</feature>
<feature type="glycosylation site" description="N-linked (GlcNAc...) asparagine" evidence="2">
    <location>
        <position position="472"/>
    </location>
</feature>
<feature type="glycosylation site" description="N-linked (GlcNAc...) asparagine" evidence="2">
    <location>
        <position position="547"/>
    </location>
</feature>
<name>HEXB1_DICDI</name>
<comment type="function">
    <text evidence="1">Responsible for the degradation of GM2 gangliosides, and a variety of other molecules containing terminal N-acetyl hexosamines.</text>
</comment>
<comment type="catalytic activity">
    <reaction>
        <text>Hydrolysis of terminal non-reducing N-acetyl-D-hexosamine residues in N-acetyl-beta-D-hexosaminides.</text>
        <dbReference type="EC" id="3.2.1.52"/>
    </reaction>
</comment>
<comment type="subcellular location">
    <subcellularLocation>
        <location evidence="1">Lysosome</location>
    </subcellularLocation>
</comment>
<comment type="similarity">
    <text evidence="3">Belongs to the glycosyl hydrolase 20 family.</text>
</comment>
<gene>
    <name type="primary">hexb1</name>
    <name type="ORF">DDB_G0287597</name>
</gene>
<protein>
    <recommendedName>
        <fullName>Beta-hexosaminidase subunit B1</fullName>
        <ecNumber>3.2.1.52</ecNumber>
    </recommendedName>
    <alternativeName>
        <fullName>Beta-N-acetylhexosaminidase subunit B1</fullName>
    </alternativeName>
    <alternativeName>
        <fullName>N-acetyl-beta-glucosaminidase subunit B1</fullName>
    </alternativeName>
</protein>
<evidence type="ECO:0000250" key="1"/>
<evidence type="ECO:0000255" key="2"/>
<evidence type="ECO:0000305" key="3"/>
<sequence>MIILKRNIVFLLIIIIVLGIFIATSIEIKNYKLSLNQNKNEISKNPPIWPAPFYGQFGNNSILISKEFNFTIISDSTLLLNKTLSKYYNLIFTQDNLINSSSNTLNKLNINLKSKNEILKFGFDESYKLIIKNNENSKLEGNTVYGIMRGLETFYQLIKYNFSDNSYFIENCLPLIINDKPRFPHRGVMLDTSRHFYSVDTILKVIESLSYNKFNTLHWHIIDSQSFPLSSKSYPNLINGAWSKSEIYSYHDIKRIIKYGKENGIRIQLEIDMPGHAKSWSVGYPDLLPHGWNDSTTTIKCPDYDVPLDPSSPLSLPISFGLLSEFSGTDYGYNPNYDDKSNNLFNLTVDDLFHVGGDEIEYQCWNNSKRIKDWMNENNLKTFQDVAKQFQLKIIKQLLKIGKIPVLWEDTFQLFYKDLPKDVIVEIYHDQSTAINATNNGYKIISSIARYWYLEYSYSNWIRAYNFEPTLNISKSNIHLVLGGEGAIWSESIDSSNLFQKLYPTSSAIAERLWSPIYYTNLLNAKSRLQSFRCSLLKRGINSAPLNNSSPLSAFSCYNS</sequence>
<keyword id="KW-0325">Glycoprotein</keyword>
<keyword id="KW-0326">Glycosidase</keyword>
<keyword id="KW-0378">Hydrolase</keyword>
<keyword id="KW-0458">Lysosome</keyword>
<keyword id="KW-1185">Reference proteome</keyword>
<keyword id="KW-0732">Signal</keyword>
<accession>Q54K55</accession>
<proteinExistence type="inferred from homology"/>